<gene>
    <name evidence="2" type="primary">ddl</name>
    <name type="ordered locus">LHK_03053</name>
</gene>
<proteinExistence type="inferred from homology"/>
<comment type="function">
    <text evidence="2">Cell wall formation.</text>
</comment>
<comment type="catalytic activity">
    <reaction evidence="2">
        <text>2 D-alanine + ATP = D-alanyl-D-alanine + ADP + phosphate + H(+)</text>
        <dbReference type="Rhea" id="RHEA:11224"/>
        <dbReference type="ChEBI" id="CHEBI:15378"/>
        <dbReference type="ChEBI" id="CHEBI:30616"/>
        <dbReference type="ChEBI" id="CHEBI:43474"/>
        <dbReference type="ChEBI" id="CHEBI:57416"/>
        <dbReference type="ChEBI" id="CHEBI:57822"/>
        <dbReference type="ChEBI" id="CHEBI:456216"/>
        <dbReference type="EC" id="6.3.2.4"/>
    </reaction>
</comment>
<comment type="cofactor">
    <cofactor evidence="1">
        <name>Mg(2+)</name>
        <dbReference type="ChEBI" id="CHEBI:18420"/>
    </cofactor>
    <cofactor evidence="1">
        <name>Mn(2+)</name>
        <dbReference type="ChEBI" id="CHEBI:29035"/>
    </cofactor>
    <text evidence="1">Binds 2 magnesium or manganese ions per subunit.</text>
</comment>
<comment type="pathway">
    <text evidence="2">Cell wall biogenesis; peptidoglycan biosynthesis.</text>
</comment>
<comment type="subcellular location">
    <subcellularLocation>
        <location evidence="2">Cytoplasm</location>
    </subcellularLocation>
</comment>
<comment type="similarity">
    <text evidence="2">Belongs to the D-alanine--D-alanine ligase family.</text>
</comment>
<sequence length="308" mass="33025">MNETMKSRFGKVAVMMGGNSCEREISLMSGQGVLNALRGQGVDAHAFDPAEKPLAALQSEGFDRVFIALHGAFGEDGTLQGALETMGIPYTGCGVMASAIGMDKWRSKLVWKAAGLPVPDFRLLADDSDFAAIEAELGLPMFVKPACEGSSLGVTKVRKAGELAQAYAEARKFDPLVLAEQFVGGGEYTVALLEGRALPAIKIEPATEFYDYDAKYFRDDTVYRCPAGMDDEHELAMRRLAEQGFAVLGGSGWGRIDFLVDEAGQPYLLEINTAPGMTTHSLVPMAAREAGLTYEALCLKVLEAAHVG</sequence>
<name>DDL_LARHH</name>
<evidence type="ECO:0000250" key="1"/>
<evidence type="ECO:0000255" key="2">
    <source>
        <dbReference type="HAMAP-Rule" id="MF_00047"/>
    </source>
</evidence>
<protein>
    <recommendedName>
        <fullName evidence="2">D-alanine--D-alanine ligase</fullName>
        <ecNumber evidence="2">6.3.2.4</ecNumber>
    </recommendedName>
    <alternativeName>
        <fullName evidence="2">D-Ala-D-Ala ligase</fullName>
    </alternativeName>
    <alternativeName>
        <fullName evidence="2">D-alanylalanine synthetase</fullName>
    </alternativeName>
</protein>
<keyword id="KW-0067">ATP-binding</keyword>
<keyword id="KW-0133">Cell shape</keyword>
<keyword id="KW-0961">Cell wall biogenesis/degradation</keyword>
<keyword id="KW-0963">Cytoplasm</keyword>
<keyword id="KW-0436">Ligase</keyword>
<keyword id="KW-0460">Magnesium</keyword>
<keyword id="KW-0464">Manganese</keyword>
<keyword id="KW-0479">Metal-binding</keyword>
<keyword id="KW-0547">Nucleotide-binding</keyword>
<keyword id="KW-0573">Peptidoglycan synthesis</keyword>
<keyword id="KW-1185">Reference proteome</keyword>
<feature type="chain" id="PRO_1000202201" description="D-alanine--D-alanine ligase">
    <location>
        <begin position="1"/>
        <end position="308"/>
    </location>
</feature>
<feature type="domain" description="ATP-grasp" evidence="2">
    <location>
        <begin position="108"/>
        <end position="303"/>
    </location>
</feature>
<feature type="binding site" evidence="2">
    <location>
        <begin position="134"/>
        <end position="189"/>
    </location>
    <ligand>
        <name>ATP</name>
        <dbReference type="ChEBI" id="CHEBI:30616"/>
    </ligand>
</feature>
<feature type="binding site" evidence="2">
    <location>
        <position position="257"/>
    </location>
    <ligand>
        <name>Mg(2+)</name>
        <dbReference type="ChEBI" id="CHEBI:18420"/>
        <label>1</label>
    </ligand>
</feature>
<feature type="binding site" evidence="2">
    <location>
        <position position="270"/>
    </location>
    <ligand>
        <name>Mg(2+)</name>
        <dbReference type="ChEBI" id="CHEBI:18420"/>
        <label>1</label>
    </ligand>
</feature>
<feature type="binding site" evidence="2">
    <location>
        <position position="270"/>
    </location>
    <ligand>
        <name>Mg(2+)</name>
        <dbReference type="ChEBI" id="CHEBI:18420"/>
        <label>2</label>
    </ligand>
</feature>
<feature type="binding site" evidence="2">
    <location>
        <position position="272"/>
    </location>
    <ligand>
        <name>Mg(2+)</name>
        <dbReference type="ChEBI" id="CHEBI:18420"/>
        <label>2</label>
    </ligand>
</feature>
<accession>C1D5L4</accession>
<dbReference type="EC" id="6.3.2.4" evidence="2"/>
<dbReference type="EMBL" id="CP001154">
    <property type="protein sequence ID" value="ACO76031.1"/>
    <property type="molecule type" value="Genomic_DNA"/>
</dbReference>
<dbReference type="SMR" id="C1D5L4"/>
<dbReference type="STRING" id="557598.LHK_03053"/>
<dbReference type="KEGG" id="lhk:LHK_03053"/>
<dbReference type="eggNOG" id="COG1181">
    <property type="taxonomic scope" value="Bacteria"/>
</dbReference>
<dbReference type="HOGENOM" id="CLU_039268_1_2_4"/>
<dbReference type="UniPathway" id="UPA00219"/>
<dbReference type="Proteomes" id="UP000002010">
    <property type="component" value="Chromosome"/>
</dbReference>
<dbReference type="GO" id="GO:0005737">
    <property type="term" value="C:cytoplasm"/>
    <property type="evidence" value="ECO:0007669"/>
    <property type="project" value="UniProtKB-SubCell"/>
</dbReference>
<dbReference type="GO" id="GO:0005524">
    <property type="term" value="F:ATP binding"/>
    <property type="evidence" value="ECO:0007669"/>
    <property type="project" value="UniProtKB-KW"/>
</dbReference>
<dbReference type="GO" id="GO:0008716">
    <property type="term" value="F:D-alanine-D-alanine ligase activity"/>
    <property type="evidence" value="ECO:0007669"/>
    <property type="project" value="UniProtKB-UniRule"/>
</dbReference>
<dbReference type="GO" id="GO:0046872">
    <property type="term" value="F:metal ion binding"/>
    <property type="evidence" value="ECO:0007669"/>
    <property type="project" value="UniProtKB-KW"/>
</dbReference>
<dbReference type="GO" id="GO:0071555">
    <property type="term" value="P:cell wall organization"/>
    <property type="evidence" value="ECO:0007669"/>
    <property type="project" value="UniProtKB-KW"/>
</dbReference>
<dbReference type="GO" id="GO:0009252">
    <property type="term" value="P:peptidoglycan biosynthetic process"/>
    <property type="evidence" value="ECO:0007669"/>
    <property type="project" value="UniProtKB-UniRule"/>
</dbReference>
<dbReference type="GO" id="GO:0008360">
    <property type="term" value="P:regulation of cell shape"/>
    <property type="evidence" value="ECO:0007669"/>
    <property type="project" value="UniProtKB-KW"/>
</dbReference>
<dbReference type="FunFam" id="3.30.470.20:FF:000008">
    <property type="entry name" value="D-alanine--D-alanine ligase"/>
    <property type="match status" value="1"/>
</dbReference>
<dbReference type="FunFam" id="3.40.50.20:FF:000013">
    <property type="entry name" value="D-alanine--D-alanine ligase"/>
    <property type="match status" value="1"/>
</dbReference>
<dbReference type="Gene3D" id="3.40.50.20">
    <property type="match status" value="1"/>
</dbReference>
<dbReference type="Gene3D" id="3.30.1490.20">
    <property type="entry name" value="ATP-grasp fold, A domain"/>
    <property type="match status" value="1"/>
</dbReference>
<dbReference type="Gene3D" id="3.30.470.20">
    <property type="entry name" value="ATP-grasp fold, B domain"/>
    <property type="match status" value="1"/>
</dbReference>
<dbReference type="HAMAP" id="MF_00047">
    <property type="entry name" value="Dala_Dala_lig"/>
    <property type="match status" value="1"/>
</dbReference>
<dbReference type="InterPro" id="IPR011761">
    <property type="entry name" value="ATP-grasp"/>
</dbReference>
<dbReference type="InterPro" id="IPR013815">
    <property type="entry name" value="ATP_grasp_subdomain_1"/>
</dbReference>
<dbReference type="InterPro" id="IPR000291">
    <property type="entry name" value="D-Ala_lig_Van_CS"/>
</dbReference>
<dbReference type="InterPro" id="IPR005905">
    <property type="entry name" value="D_ala_D_ala"/>
</dbReference>
<dbReference type="InterPro" id="IPR011095">
    <property type="entry name" value="Dala_Dala_lig_C"/>
</dbReference>
<dbReference type="InterPro" id="IPR011127">
    <property type="entry name" value="Dala_Dala_lig_N"/>
</dbReference>
<dbReference type="InterPro" id="IPR016185">
    <property type="entry name" value="PreATP-grasp_dom_sf"/>
</dbReference>
<dbReference type="NCBIfam" id="TIGR01205">
    <property type="entry name" value="D_ala_D_alaTIGR"/>
    <property type="match status" value="1"/>
</dbReference>
<dbReference type="NCBIfam" id="NF002378">
    <property type="entry name" value="PRK01372.1"/>
    <property type="match status" value="1"/>
</dbReference>
<dbReference type="PANTHER" id="PTHR23132">
    <property type="entry name" value="D-ALANINE--D-ALANINE LIGASE"/>
    <property type="match status" value="1"/>
</dbReference>
<dbReference type="PANTHER" id="PTHR23132:SF23">
    <property type="entry name" value="D-ALANINE--D-ALANINE LIGASE B"/>
    <property type="match status" value="1"/>
</dbReference>
<dbReference type="Pfam" id="PF07478">
    <property type="entry name" value="Dala_Dala_lig_C"/>
    <property type="match status" value="1"/>
</dbReference>
<dbReference type="Pfam" id="PF01820">
    <property type="entry name" value="Dala_Dala_lig_N"/>
    <property type="match status" value="1"/>
</dbReference>
<dbReference type="PIRSF" id="PIRSF039102">
    <property type="entry name" value="Ddl/VanB"/>
    <property type="match status" value="1"/>
</dbReference>
<dbReference type="SUPFAM" id="SSF56059">
    <property type="entry name" value="Glutathione synthetase ATP-binding domain-like"/>
    <property type="match status" value="1"/>
</dbReference>
<dbReference type="SUPFAM" id="SSF52440">
    <property type="entry name" value="PreATP-grasp domain"/>
    <property type="match status" value="1"/>
</dbReference>
<dbReference type="PROSITE" id="PS50975">
    <property type="entry name" value="ATP_GRASP"/>
    <property type="match status" value="1"/>
</dbReference>
<dbReference type="PROSITE" id="PS00843">
    <property type="entry name" value="DALA_DALA_LIGASE_1"/>
    <property type="match status" value="1"/>
</dbReference>
<dbReference type="PROSITE" id="PS00844">
    <property type="entry name" value="DALA_DALA_LIGASE_2"/>
    <property type="match status" value="1"/>
</dbReference>
<reference key="1">
    <citation type="journal article" date="2009" name="PLoS Genet.">
        <title>The complete genome and proteome of Laribacter hongkongensis reveal potential mechanisms for adaptations to different temperatures and habitats.</title>
        <authorList>
            <person name="Woo P.C.Y."/>
            <person name="Lau S.K.P."/>
            <person name="Tse H."/>
            <person name="Teng J.L.L."/>
            <person name="Curreem S.O."/>
            <person name="Tsang A.K.L."/>
            <person name="Fan R.Y.Y."/>
            <person name="Wong G.K.M."/>
            <person name="Huang Y."/>
            <person name="Loman N.J."/>
            <person name="Snyder L.A.S."/>
            <person name="Cai J.J."/>
            <person name="Huang J.-D."/>
            <person name="Mak W."/>
            <person name="Pallen M.J."/>
            <person name="Lok S."/>
            <person name="Yuen K.-Y."/>
        </authorList>
    </citation>
    <scope>NUCLEOTIDE SEQUENCE [LARGE SCALE GENOMIC DNA]</scope>
    <source>
        <strain>HLHK9</strain>
    </source>
</reference>
<organism>
    <name type="scientific">Laribacter hongkongensis (strain HLHK9)</name>
    <dbReference type="NCBI Taxonomy" id="557598"/>
    <lineage>
        <taxon>Bacteria</taxon>
        <taxon>Pseudomonadati</taxon>
        <taxon>Pseudomonadota</taxon>
        <taxon>Betaproteobacteria</taxon>
        <taxon>Neisseriales</taxon>
        <taxon>Aquaspirillaceae</taxon>
        <taxon>Laribacter</taxon>
    </lineage>
</organism>